<protein>
    <recommendedName>
        <fullName evidence="1">Glucose-1-phosphate adenylyltransferase</fullName>
        <ecNumber evidence="1">2.7.7.27</ecNumber>
    </recommendedName>
    <alternativeName>
        <fullName evidence="1">ADP-glucose pyrophosphorylase</fullName>
        <shortName evidence="1">ADPGlc PPase</shortName>
    </alternativeName>
    <alternativeName>
        <fullName evidence="1">ADP-glucose synthase</fullName>
    </alternativeName>
</protein>
<comment type="function">
    <text evidence="1">Involved in the biosynthesis of ADP-glucose, a building block required for the elongation reactions to produce glycogen. Catalyzes the reaction between ATP and alpha-D-glucose 1-phosphate (G1P) to produce pyrophosphate and ADP-Glc.</text>
</comment>
<comment type="catalytic activity">
    <reaction evidence="1">
        <text>alpha-D-glucose 1-phosphate + ATP + H(+) = ADP-alpha-D-glucose + diphosphate</text>
        <dbReference type="Rhea" id="RHEA:12120"/>
        <dbReference type="ChEBI" id="CHEBI:15378"/>
        <dbReference type="ChEBI" id="CHEBI:30616"/>
        <dbReference type="ChEBI" id="CHEBI:33019"/>
        <dbReference type="ChEBI" id="CHEBI:57498"/>
        <dbReference type="ChEBI" id="CHEBI:58601"/>
        <dbReference type="EC" id="2.7.7.27"/>
    </reaction>
</comment>
<comment type="pathway">
    <text evidence="1">Glycan biosynthesis; glycogen biosynthesis.</text>
</comment>
<comment type="subunit">
    <text evidence="1">Homotetramer.</text>
</comment>
<comment type="similarity">
    <text evidence="1">Belongs to the bacterial/plant glucose-1-phosphate adenylyltransferase family.</text>
</comment>
<dbReference type="EC" id="2.7.7.27" evidence="1"/>
<dbReference type="EMBL" id="CP000921">
    <property type="protein sequence ID" value="ACO22717.1"/>
    <property type="molecule type" value="Genomic_DNA"/>
</dbReference>
<dbReference type="RefSeq" id="WP_000787276.1">
    <property type="nucleotide sequence ID" value="NC_012469.1"/>
</dbReference>
<dbReference type="SMR" id="C1CRM1"/>
<dbReference type="KEGG" id="snt:SPT_1167"/>
<dbReference type="HOGENOM" id="CLU_029499_14_0_9"/>
<dbReference type="UniPathway" id="UPA00164"/>
<dbReference type="GO" id="GO:0005524">
    <property type="term" value="F:ATP binding"/>
    <property type="evidence" value="ECO:0007669"/>
    <property type="project" value="UniProtKB-KW"/>
</dbReference>
<dbReference type="GO" id="GO:0008878">
    <property type="term" value="F:glucose-1-phosphate adenylyltransferase activity"/>
    <property type="evidence" value="ECO:0007669"/>
    <property type="project" value="UniProtKB-UniRule"/>
</dbReference>
<dbReference type="GO" id="GO:0005978">
    <property type="term" value="P:glycogen biosynthetic process"/>
    <property type="evidence" value="ECO:0007669"/>
    <property type="project" value="UniProtKB-UniRule"/>
</dbReference>
<dbReference type="CDD" id="cd02508">
    <property type="entry name" value="ADP_Glucose_PP"/>
    <property type="match status" value="1"/>
</dbReference>
<dbReference type="CDD" id="cd04651">
    <property type="entry name" value="LbH_G1P_AT_C"/>
    <property type="match status" value="1"/>
</dbReference>
<dbReference type="Gene3D" id="2.160.10.10">
    <property type="entry name" value="Hexapeptide repeat proteins"/>
    <property type="match status" value="1"/>
</dbReference>
<dbReference type="Gene3D" id="3.90.550.10">
    <property type="entry name" value="Spore Coat Polysaccharide Biosynthesis Protein SpsA, Chain A"/>
    <property type="match status" value="1"/>
</dbReference>
<dbReference type="HAMAP" id="MF_00624">
    <property type="entry name" value="GlgC"/>
    <property type="match status" value="1"/>
</dbReference>
<dbReference type="InterPro" id="IPR011831">
    <property type="entry name" value="ADP-Glc_PPase"/>
</dbReference>
<dbReference type="InterPro" id="IPR005836">
    <property type="entry name" value="ADP_Glu_pyroP_CS"/>
</dbReference>
<dbReference type="InterPro" id="IPR023049">
    <property type="entry name" value="GlgC_bac"/>
</dbReference>
<dbReference type="InterPro" id="IPR056818">
    <property type="entry name" value="GlmU/GlgC-like_hexapep"/>
</dbReference>
<dbReference type="InterPro" id="IPR005835">
    <property type="entry name" value="NTP_transferase_dom"/>
</dbReference>
<dbReference type="InterPro" id="IPR029044">
    <property type="entry name" value="Nucleotide-diphossugar_trans"/>
</dbReference>
<dbReference type="InterPro" id="IPR011004">
    <property type="entry name" value="Trimer_LpxA-like_sf"/>
</dbReference>
<dbReference type="NCBIfam" id="TIGR02091">
    <property type="entry name" value="glgC"/>
    <property type="match status" value="1"/>
</dbReference>
<dbReference type="NCBIfam" id="NF003670">
    <property type="entry name" value="PRK05293.1"/>
    <property type="match status" value="1"/>
</dbReference>
<dbReference type="PANTHER" id="PTHR43523:SF2">
    <property type="entry name" value="GLUCOSE-1-PHOSPHATE ADENYLYLTRANSFERASE"/>
    <property type="match status" value="1"/>
</dbReference>
<dbReference type="PANTHER" id="PTHR43523">
    <property type="entry name" value="GLUCOSE-1-PHOSPHATE ADENYLYLTRANSFERASE-RELATED"/>
    <property type="match status" value="1"/>
</dbReference>
<dbReference type="Pfam" id="PF24894">
    <property type="entry name" value="Hexapep_GlmU"/>
    <property type="match status" value="1"/>
</dbReference>
<dbReference type="Pfam" id="PF00483">
    <property type="entry name" value="NTP_transferase"/>
    <property type="match status" value="1"/>
</dbReference>
<dbReference type="SUPFAM" id="SSF53448">
    <property type="entry name" value="Nucleotide-diphospho-sugar transferases"/>
    <property type="match status" value="1"/>
</dbReference>
<dbReference type="SUPFAM" id="SSF51161">
    <property type="entry name" value="Trimeric LpxA-like enzymes"/>
    <property type="match status" value="1"/>
</dbReference>
<dbReference type="PROSITE" id="PS00808">
    <property type="entry name" value="ADP_GLC_PYROPHOSPH_1"/>
    <property type="match status" value="1"/>
</dbReference>
<dbReference type="PROSITE" id="PS00809">
    <property type="entry name" value="ADP_GLC_PYROPHOSPH_2"/>
    <property type="match status" value="1"/>
</dbReference>
<dbReference type="PROSITE" id="PS00810">
    <property type="entry name" value="ADP_GLC_PYROPHOSPH_3"/>
    <property type="match status" value="1"/>
</dbReference>
<keyword id="KW-0067">ATP-binding</keyword>
<keyword id="KW-0119">Carbohydrate metabolism</keyword>
<keyword id="KW-0320">Glycogen biosynthesis</keyword>
<keyword id="KW-0321">Glycogen metabolism</keyword>
<keyword id="KW-0547">Nucleotide-binding</keyword>
<keyword id="KW-0548">Nucleotidyltransferase</keyword>
<keyword id="KW-0808">Transferase</keyword>
<gene>
    <name evidence="1" type="primary">glgC</name>
    <name type="ordered locus">SPT_1167</name>
</gene>
<accession>C1CRM1</accession>
<proteinExistence type="inferred from homology"/>
<name>GLGC_STRZT</name>
<evidence type="ECO:0000255" key="1">
    <source>
        <dbReference type="HAMAP-Rule" id="MF_00624"/>
    </source>
</evidence>
<sequence length="380" mass="41491">MKNEMLALILAGGQGTRLGKLTQSIAKPAVQFGGRYRIIDFALSNCANSGIHNVGVVTQYQPLALNNHIGNGSSWGLDGINSGVSILQPYSASEGNRWFEGTSHAIYQNIDYIDSVNPEYVLILSGDHIYKMDYDDMLQSHKDNNASLTVAVLDVPLKEASRFGIMNTDANNRIVEFEEKPAQPKSTKASMGIYIFDWQRLRNMLVAAEKSKVGMSDFGKNVIPNYLESGESVYAYEFSGYWKDVGTIESLWEANMEYISPENALDSRNRQWKIYSRNLISPPNFLGANAHVEDSLVVDGCFVDGTVKHSILSTGAQVREGAEVLDSVIMSGAIIGQGAKIKRAIIGEGAIISDGVEIDGTDEVQVVGYNEVVGVATDED</sequence>
<organism>
    <name type="scientific">Streptococcus pneumoniae (strain Taiwan19F-14)</name>
    <dbReference type="NCBI Taxonomy" id="487213"/>
    <lineage>
        <taxon>Bacteria</taxon>
        <taxon>Bacillati</taxon>
        <taxon>Bacillota</taxon>
        <taxon>Bacilli</taxon>
        <taxon>Lactobacillales</taxon>
        <taxon>Streptococcaceae</taxon>
        <taxon>Streptococcus</taxon>
    </lineage>
</organism>
<feature type="chain" id="PRO_1000147240" description="Glucose-1-phosphate adenylyltransferase">
    <location>
        <begin position="1"/>
        <end position="380"/>
    </location>
</feature>
<feature type="binding site" evidence="1">
    <location>
        <position position="164"/>
    </location>
    <ligand>
        <name>alpha-D-glucose 1-phosphate</name>
        <dbReference type="ChEBI" id="CHEBI:58601"/>
    </ligand>
</feature>
<feature type="binding site" evidence="1">
    <location>
        <begin position="179"/>
        <end position="180"/>
    </location>
    <ligand>
        <name>alpha-D-glucose 1-phosphate</name>
        <dbReference type="ChEBI" id="CHEBI:58601"/>
    </ligand>
</feature>
<feature type="binding site" evidence="1">
    <location>
        <position position="190"/>
    </location>
    <ligand>
        <name>alpha-D-glucose 1-phosphate</name>
        <dbReference type="ChEBI" id="CHEBI:58601"/>
    </ligand>
</feature>
<reference key="1">
    <citation type="journal article" date="2010" name="Genome Biol.">
        <title>Structure and dynamics of the pan-genome of Streptococcus pneumoniae and closely related species.</title>
        <authorList>
            <person name="Donati C."/>
            <person name="Hiller N.L."/>
            <person name="Tettelin H."/>
            <person name="Muzzi A."/>
            <person name="Croucher N.J."/>
            <person name="Angiuoli S.V."/>
            <person name="Oggioni M."/>
            <person name="Dunning Hotopp J.C."/>
            <person name="Hu F.Z."/>
            <person name="Riley D.R."/>
            <person name="Covacci A."/>
            <person name="Mitchell T.J."/>
            <person name="Bentley S.D."/>
            <person name="Kilian M."/>
            <person name="Ehrlich G.D."/>
            <person name="Rappuoli R."/>
            <person name="Moxon E.R."/>
            <person name="Masignani V."/>
        </authorList>
    </citation>
    <scope>NUCLEOTIDE SEQUENCE [LARGE SCALE GENOMIC DNA]</scope>
    <source>
        <strain>Taiwan19F-14</strain>
    </source>
</reference>